<organism>
    <name type="scientific">Rickettsia rickettsii (strain Iowa)</name>
    <dbReference type="NCBI Taxonomy" id="452659"/>
    <lineage>
        <taxon>Bacteria</taxon>
        <taxon>Pseudomonadati</taxon>
        <taxon>Pseudomonadota</taxon>
        <taxon>Alphaproteobacteria</taxon>
        <taxon>Rickettsiales</taxon>
        <taxon>Rickettsiaceae</taxon>
        <taxon>Rickettsieae</taxon>
        <taxon>Rickettsia</taxon>
        <taxon>spotted fever group</taxon>
    </lineage>
</organism>
<reference key="1">
    <citation type="journal article" date="2008" name="Infect. Immun.">
        <title>Genomic comparison of virulent Rickettsia rickettsii Sheila Smith and avirulent Rickettsia rickettsii Iowa.</title>
        <authorList>
            <person name="Ellison D.W."/>
            <person name="Clark T.R."/>
            <person name="Sturdevant D.E."/>
            <person name="Virtaneva K."/>
            <person name="Porcella S.F."/>
            <person name="Hackstadt T."/>
        </authorList>
    </citation>
    <scope>NUCLEOTIDE SEQUENCE [LARGE SCALE GENOMIC DNA]</scope>
    <source>
        <strain>Iowa</strain>
    </source>
</reference>
<sequence length="255" mass="28499">MNINKIALIYNHNSKHLAIIEEIKKLYNYCKIEEAEVIIVIGGDGELLHNIHRYMHLNIPFYGVNLGSLGFLMNPLDTKKLLQNIHDSTVSILNPLLMQVADTNGQIYTALAINEVSIFRKTNQAAKFRIEVNGIERMNELVADGALVATPAGSSAYNLSASGPILPLESNMLCLTPICSFRPRRWHGALLLSSATIKFEILNTNKRPVNATADFQEFNNITNVTVKSTKDKPVKLLFNKNHTLEDRIIKEQFGG</sequence>
<keyword id="KW-0067">ATP-binding</keyword>
<keyword id="KW-0963">Cytoplasm</keyword>
<keyword id="KW-0418">Kinase</keyword>
<keyword id="KW-0520">NAD</keyword>
<keyword id="KW-0521">NADP</keyword>
<keyword id="KW-0547">Nucleotide-binding</keyword>
<keyword id="KW-0808">Transferase</keyword>
<accession>B0BXL4</accession>
<feature type="chain" id="PRO_1000079507" description="NAD kinase">
    <location>
        <begin position="1"/>
        <end position="255"/>
    </location>
</feature>
<feature type="active site" description="Proton acceptor" evidence="1">
    <location>
        <position position="44"/>
    </location>
</feature>
<feature type="binding site" evidence="1">
    <location>
        <begin position="44"/>
        <end position="45"/>
    </location>
    <ligand>
        <name>NAD(+)</name>
        <dbReference type="ChEBI" id="CHEBI:57540"/>
    </ligand>
</feature>
<feature type="binding site" evidence="1">
    <location>
        <position position="49"/>
    </location>
    <ligand>
        <name>NAD(+)</name>
        <dbReference type="ChEBI" id="CHEBI:57540"/>
    </ligand>
</feature>
<feature type="binding site" evidence="1">
    <location>
        <begin position="114"/>
        <end position="115"/>
    </location>
    <ligand>
        <name>NAD(+)</name>
        <dbReference type="ChEBI" id="CHEBI:57540"/>
    </ligand>
</feature>
<feature type="binding site" evidence="1">
    <location>
        <position position="144"/>
    </location>
    <ligand>
        <name>NAD(+)</name>
        <dbReference type="ChEBI" id="CHEBI:57540"/>
    </ligand>
</feature>
<feature type="binding site" evidence="1">
    <location>
        <position position="152"/>
    </location>
    <ligand>
        <name>NAD(+)</name>
        <dbReference type="ChEBI" id="CHEBI:57540"/>
    </ligand>
</feature>
<feature type="binding site" evidence="1">
    <location>
        <begin position="155"/>
        <end position="160"/>
    </location>
    <ligand>
        <name>NAD(+)</name>
        <dbReference type="ChEBI" id="CHEBI:57540"/>
    </ligand>
</feature>
<feature type="binding site" evidence="1">
    <location>
        <position position="216"/>
    </location>
    <ligand>
        <name>NAD(+)</name>
        <dbReference type="ChEBI" id="CHEBI:57540"/>
    </ligand>
</feature>
<protein>
    <recommendedName>
        <fullName evidence="1">NAD kinase</fullName>
        <ecNumber evidence="1">2.7.1.23</ecNumber>
    </recommendedName>
    <alternativeName>
        <fullName evidence="1">ATP-dependent NAD kinase</fullName>
    </alternativeName>
</protein>
<evidence type="ECO:0000255" key="1">
    <source>
        <dbReference type="HAMAP-Rule" id="MF_00361"/>
    </source>
</evidence>
<comment type="function">
    <text evidence="1">Involved in the regulation of the intracellular balance of NAD and NADP, and is a key enzyme in the biosynthesis of NADP. Catalyzes specifically the phosphorylation on 2'-hydroxyl of the adenosine moiety of NAD to yield NADP.</text>
</comment>
<comment type="catalytic activity">
    <reaction evidence="1">
        <text>NAD(+) + ATP = ADP + NADP(+) + H(+)</text>
        <dbReference type="Rhea" id="RHEA:18629"/>
        <dbReference type="ChEBI" id="CHEBI:15378"/>
        <dbReference type="ChEBI" id="CHEBI:30616"/>
        <dbReference type="ChEBI" id="CHEBI:57540"/>
        <dbReference type="ChEBI" id="CHEBI:58349"/>
        <dbReference type="ChEBI" id="CHEBI:456216"/>
        <dbReference type="EC" id="2.7.1.23"/>
    </reaction>
</comment>
<comment type="cofactor">
    <cofactor evidence="1">
        <name>a divalent metal cation</name>
        <dbReference type="ChEBI" id="CHEBI:60240"/>
    </cofactor>
</comment>
<comment type="subcellular location">
    <subcellularLocation>
        <location evidence="1">Cytoplasm</location>
    </subcellularLocation>
</comment>
<comment type="similarity">
    <text evidence="1">Belongs to the NAD kinase family.</text>
</comment>
<proteinExistence type="inferred from homology"/>
<dbReference type="EC" id="2.7.1.23" evidence="1"/>
<dbReference type="EMBL" id="CP000766">
    <property type="protein sequence ID" value="ABY72590.1"/>
    <property type="molecule type" value="Genomic_DNA"/>
</dbReference>
<dbReference type="RefSeq" id="WP_012150807.1">
    <property type="nucleotide sequence ID" value="NC_010263.3"/>
</dbReference>
<dbReference type="SMR" id="B0BXL4"/>
<dbReference type="KEGG" id="rrj:RrIowa_0732"/>
<dbReference type="eggNOG" id="COG0061">
    <property type="taxonomic scope" value="Bacteria"/>
</dbReference>
<dbReference type="HOGENOM" id="CLU_073319_0_0_5"/>
<dbReference type="Proteomes" id="UP000000796">
    <property type="component" value="Chromosome"/>
</dbReference>
<dbReference type="GO" id="GO:0005737">
    <property type="term" value="C:cytoplasm"/>
    <property type="evidence" value="ECO:0007669"/>
    <property type="project" value="UniProtKB-SubCell"/>
</dbReference>
<dbReference type="GO" id="GO:0005524">
    <property type="term" value="F:ATP binding"/>
    <property type="evidence" value="ECO:0007669"/>
    <property type="project" value="UniProtKB-KW"/>
</dbReference>
<dbReference type="GO" id="GO:0046872">
    <property type="term" value="F:metal ion binding"/>
    <property type="evidence" value="ECO:0007669"/>
    <property type="project" value="UniProtKB-UniRule"/>
</dbReference>
<dbReference type="GO" id="GO:0051287">
    <property type="term" value="F:NAD binding"/>
    <property type="evidence" value="ECO:0007669"/>
    <property type="project" value="UniProtKB-ARBA"/>
</dbReference>
<dbReference type="GO" id="GO:0003951">
    <property type="term" value="F:NAD+ kinase activity"/>
    <property type="evidence" value="ECO:0007669"/>
    <property type="project" value="UniProtKB-UniRule"/>
</dbReference>
<dbReference type="GO" id="GO:0019674">
    <property type="term" value="P:NAD metabolic process"/>
    <property type="evidence" value="ECO:0007669"/>
    <property type="project" value="InterPro"/>
</dbReference>
<dbReference type="GO" id="GO:0006741">
    <property type="term" value="P:NADP biosynthetic process"/>
    <property type="evidence" value="ECO:0007669"/>
    <property type="project" value="UniProtKB-UniRule"/>
</dbReference>
<dbReference type="Gene3D" id="3.40.50.10330">
    <property type="entry name" value="Probable inorganic polyphosphate/atp-NAD kinase, domain 1"/>
    <property type="match status" value="1"/>
</dbReference>
<dbReference type="Gene3D" id="2.60.200.30">
    <property type="entry name" value="Probable inorganic polyphosphate/atp-NAD kinase, domain 2"/>
    <property type="match status" value="1"/>
</dbReference>
<dbReference type="HAMAP" id="MF_00361">
    <property type="entry name" value="NAD_kinase"/>
    <property type="match status" value="1"/>
</dbReference>
<dbReference type="InterPro" id="IPR017438">
    <property type="entry name" value="ATP-NAD_kinase_N"/>
</dbReference>
<dbReference type="InterPro" id="IPR017437">
    <property type="entry name" value="ATP-NAD_kinase_PpnK-typ_C"/>
</dbReference>
<dbReference type="InterPro" id="IPR016064">
    <property type="entry name" value="NAD/diacylglycerol_kinase_sf"/>
</dbReference>
<dbReference type="InterPro" id="IPR002504">
    <property type="entry name" value="NADK"/>
</dbReference>
<dbReference type="NCBIfam" id="NF003406">
    <property type="entry name" value="PRK04761.1"/>
    <property type="match status" value="1"/>
</dbReference>
<dbReference type="PANTHER" id="PTHR20275">
    <property type="entry name" value="NAD KINASE"/>
    <property type="match status" value="1"/>
</dbReference>
<dbReference type="PANTHER" id="PTHR20275:SF0">
    <property type="entry name" value="NAD KINASE"/>
    <property type="match status" value="1"/>
</dbReference>
<dbReference type="Pfam" id="PF01513">
    <property type="entry name" value="NAD_kinase"/>
    <property type="match status" value="1"/>
</dbReference>
<dbReference type="Pfam" id="PF20143">
    <property type="entry name" value="NAD_kinase_C"/>
    <property type="match status" value="1"/>
</dbReference>
<dbReference type="SUPFAM" id="SSF111331">
    <property type="entry name" value="NAD kinase/diacylglycerol kinase-like"/>
    <property type="match status" value="1"/>
</dbReference>
<name>NADK_RICRO</name>
<gene>
    <name evidence="1" type="primary">nadK</name>
    <name type="ordered locus">RrIowa_0732</name>
</gene>